<keyword id="KW-0030">Aminoacyl-tRNA synthetase</keyword>
<keyword id="KW-0067">ATP-binding</keyword>
<keyword id="KW-0963">Cytoplasm</keyword>
<keyword id="KW-0436">Ligase</keyword>
<keyword id="KW-0547">Nucleotide-binding</keyword>
<keyword id="KW-0648">Protein biosynthesis</keyword>
<keyword id="KW-1185">Reference proteome</keyword>
<evidence type="ECO:0000250" key="1"/>
<evidence type="ECO:0000305" key="2"/>
<organism>
    <name type="scientific">Mycobacterium bovis (strain ATCC BAA-935 / AF2122/97)</name>
    <dbReference type="NCBI Taxonomy" id="233413"/>
    <lineage>
        <taxon>Bacteria</taxon>
        <taxon>Bacillati</taxon>
        <taxon>Actinomycetota</taxon>
        <taxon>Actinomycetes</taxon>
        <taxon>Mycobacteriales</taxon>
        <taxon>Mycobacteriaceae</taxon>
        <taxon>Mycobacterium</taxon>
        <taxon>Mycobacterium tuberculosis complex</taxon>
    </lineage>
</organism>
<sequence length="550" mass="59709">MTPADLAELLKATAAAVLAERGLDASALPQMVTVERPRIPEHGDYASNLAMQLAKKVGTNPRELAGWLAEALTKVDGIASAEVAGPGFINMRLETAAQAKVVTSVIDAGHSYGHSLLLAGRKVNLEFVSANPTGPIHIGGTRWAAVGDALGRLLTTQGADVVREYYFNDHGAQIDRFANSLIAAAKGEPTPQDGYAGSYITNIAEQVLQKAPDALSLPDAELRETFRAIGVDLMFDHIKQSLHEFGTDFDVYTHEDSMHTGGRVENAIARLRETGNIYEKDGATWLRTSAFGDDKDRVVIKSDGKPAYIAGDLAYYLDKRQRGFDLCIYMLGADHHGYIARLKAAAAAFGDDPATVEVLIGQMVNLVRDGQPVRMSKRAGTVLTLDDLVEAIGVDAARYSLIRSSVDTAIDIDLALWSSASNENPVYYVQYAHARLSALARNAAELALIPDTNHLELLNHDKEGTLLRTLGEFPRVLETAASLREPHRVCRYLEDLAGDYHRFYDSCRVLPQGDEQPTDLHTARLALCQATRQVIANGLAIIGVTAPERM</sequence>
<name>SYR_MYCBO</name>
<protein>
    <recommendedName>
        <fullName>Arginine--tRNA ligase</fullName>
        <ecNumber>6.1.1.19</ecNumber>
    </recommendedName>
    <alternativeName>
        <fullName>Arginyl-tRNA synthetase</fullName>
        <shortName>ArgRS</shortName>
    </alternativeName>
</protein>
<feature type="chain" id="PRO_0000151581" description="Arginine--tRNA ligase">
    <location>
        <begin position="1"/>
        <end position="550"/>
    </location>
</feature>
<feature type="short sequence motif" description="'HIGH' region">
    <location>
        <begin position="130"/>
        <end position="140"/>
    </location>
</feature>
<comment type="catalytic activity">
    <reaction>
        <text>tRNA(Arg) + L-arginine + ATP = L-arginyl-tRNA(Arg) + AMP + diphosphate</text>
        <dbReference type="Rhea" id="RHEA:20301"/>
        <dbReference type="Rhea" id="RHEA-COMP:9658"/>
        <dbReference type="Rhea" id="RHEA-COMP:9673"/>
        <dbReference type="ChEBI" id="CHEBI:30616"/>
        <dbReference type="ChEBI" id="CHEBI:32682"/>
        <dbReference type="ChEBI" id="CHEBI:33019"/>
        <dbReference type="ChEBI" id="CHEBI:78442"/>
        <dbReference type="ChEBI" id="CHEBI:78513"/>
        <dbReference type="ChEBI" id="CHEBI:456215"/>
        <dbReference type="EC" id="6.1.1.19"/>
    </reaction>
</comment>
<comment type="subunit">
    <text evidence="1">Monomer.</text>
</comment>
<comment type="subcellular location">
    <subcellularLocation>
        <location evidence="1">Cytoplasm</location>
    </subcellularLocation>
</comment>
<comment type="similarity">
    <text evidence="2">Belongs to the class-I aminoacyl-tRNA synthetase family.</text>
</comment>
<accession>P67570</accession>
<accession>A0A1R3XXX7</accession>
<accession>Q10609</accession>
<accession>X2BHI6</accession>
<gene>
    <name type="primary">argS</name>
    <name type="ordered locus">BQ2027_MB1324</name>
</gene>
<proteinExistence type="inferred from homology"/>
<dbReference type="EC" id="6.1.1.19"/>
<dbReference type="EMBL" id="LT708304">
    <property type="protein sequence ID" value="SIT99927.1"/>
    <property type="molecule type" value="Genomic_DNA"/>
</dbReference>
<dbReference type="RefSeq" id="NP_854978.1">
    <property type="nucleotide sequence ID" value="NC_002945.3"/>
</dbReference>
<dbReference type="RefSeq" id="WP_003406630.1">
    <property type="nucleotide sequence ID" value="NC_002945.4"/>
</dbReference>
<dbReference type="SMR" id="P67570"/>
<dbReference type="KEGG" id="mbo:BQ2027_MB1324"/>
<dbReference type="PATRIC" id="fig|233413.5.peg.1450"/>
<dbReference type="Proteomes" id="UP000001419">
    <property type="component" value="Chromosome"/>
</dbReference>
<dbReference type="GO" id="GO:0005737">
    <property type="term" value="C:cytoplasm"/>
    <property type="evidence" value="ECO:0007669"/>
    <property type="project" value="UniProtKB-SubCell"/>
</dbReference>
<dbReference type="GO" id="GO:0004814">
    <property type="term" value="F:arginine-tRNA ligase activity"/>
    <property type="evidence" value="ECO:0007669"/>
    <property type="project" value="UniProtKB-UniRule"/>
</dbReference>
<dbReference type="GO" id="GO:0005524">
    <property type="term" value="F:ATP binding"/>
    <property type="evidence" value="ECO:0007669"/>
    <property type="project" value="UniProtKB-UniRule"/>
</dbReference>
<dbReference type="GO" id="GO:0006420">
    <property type="term" value="P:arginyl-tRNA aminoacylation"/>
    <property type="evidence" value="ECO:0007669"/>
    <property type="project" value="UniProtKB-UniRule"/>
</dbReference>
<dbReference type="CDD" id="cd07956">
    <property type="entry name" value="Anticodon_Ia_Arg"/>
    <property type="match status" value="1"/>
</dbReference>
<dbReference type="CDD" id="cd00671">
    <property type="entry name" value="ArgRS_core"/>
    <property type="match status" value="1"/>
</dbReference>
<dbReference type="FunFam" id="1.10.730.10:FF:000008">
    <property type="entry name" value="Arginine--tRNA ligase"/>
    <property type="match status" value="1"/>
</dbReference>
<dbReference type="FunFam" id="3.30.1360.70:FF:000003">
    <property type="entry name" value="Arginine--tRNA ligase"/>
    <property type="match status" value="1"/>
</dbReference>
<dbReference type="FunFam" id="3.40.50.620:FF:000062">
    <property type="entry name" value="Arginine--tRNA ligase"/>
    <property type="match status" value="1"/>
</dbReference>
<dbReference type="Gene3D" id="3.30.1360.70">
    <property type="entry name" value="Arginyl tRNA synthetase N-terminal domain"/>
    <property type="match status" value="1"/>
</dbReference>
<dbReference type="Gene3D" id="3.40.50.620">
    <property type="entry name" value="HUPs"/>
    <property type="match status" value="1"/>
</dbReference>
<dbReference type="Gene3D" id="1.10.730.10">
    <property type="entry name" value="Isoleucyl-tRNA Synthetase, Domain 1"/>
    <property type="match status" value="1"/>
</dbReference>
<dbReference type="HAMAP" id="MF_00123">
    <property type="entry name" value="Arg_tRNA_synth"/>
    <property type="match status" value="1"/>
</dbReference>
<dbReference type="InterPro" id="IPR001412">
    <property type="entry name" value="aa-tRNA-synth_I_CS"/>
</dbReference>
<dbReference type="InterPro" id="IPR001278">
    <property type="entry name" value="Arg-tRNA-ligase"/>
</dbReference>
<dbReference type="InterPro" id="IPR005148">
    <property type="entry name" value="Arg-tRNA-synth_N"/>
</dbReference>
<dbReference type="InterPro" id="IPR036695">
    <property type="entry name" value="Arg-tRNA-synth_N_sf"/>
</dbReference>
<dbReference type="InterPro" id="IPR035684">
    <property type="entry name" value="ArgRS_core"/>
</dbReference>
<dbReference type="InterPro" id="IPR008909">
    <property type="entry name" value="DALR_anticod-bd"/>
</dbReference>
<dbReference type="InterPro" id="IPR014729">
    <property type="entry name" value="Rossmann-like_a/b/a_fold"/>
</dbReference>
<dbReference type="InterPro" id="IPR009080">
    <property type="entry name" value="tRNAsynth_Ia_anticodon-bd"/>
</dbReference>
<dbReference type="NCBIfam" id="TIGR00456">
    <property type="entry name" value="argS"/>
    <property type="match status" value="1"/>
</dbReference>
<dbReference type="PANTHER" id="PTHR11956:SF5">
    <property type="entry name" value="ARGININE--TRNA LIGASE, CYTOPLASMIC"/>
    <property type="match status" value="1"/>
</dbReference>
<dbReference type="PANTHER" id="PTHR11956">
    <property type="entry name" value="ARGINYL-TRNA SYNTHETASE"/>
    <property type="match status" value="1"/>
</dbReference>
<dbReference type="Pfam" id="PF03485">
    <property type="entry name" value="Arg_tRNA_synt_N"/>
    <property type="match status" value="1"/>
</dbReference>
<dbReference type="Pfam" id="PF05746">
    <property type="entry name" value="DALR_1"/>
    <property type="match status" value="1"/>
</dbReference>
<dbReference type="Pfam" id="PF00750">
    <property type="entry name" value="tRNA-synt_1d"/>
    <property type="match status" value="1"/>
</dbReference>
<dbReference type="PRINTS" id="PR01038">
    <property type="entry name" value="TRNASYNTHARG"/>
</dbReference>
<dbReference type="SMART" id="SM01016">
    <property type="entry name" value="Arg_tRNA_synt_N"/>
    <property type="match status" value="1"/>
</dbReference>
<dbReference type="SMART" id="SM00836">
    <property type="entry name" value="DALR_1"/>
    <property type="match status" value="1"/>
</dbReference>
<dbReference type="SUPFAM" id="SSF47323">
    <property type="entry name" value="Anticodon-binding domain of a subclass of class I aminoacyl-tRNA synthetases"/>
    <property type="match status" value="1"/>
</dbReference>
<dbReference type="SUPFAM" id="SSF55190">
    <property type="entry name" value="Arginyl-tRNA synthetase (ArgRS), N-terminal 'additional' domain"/>
    <property type="match status" value="1"/>
</dbReference>
<dbReference type="SUPFAM" id="SSF52374">
    <property type="entry name" value="Nucleotidylyl transferase"/>
    <property type="match status" value="1"/>
</dbReference>
<dbReference type="PROSITE" id="PS00178">
    <property type="entry name" value="AA_TRNA_LIGASE_I"/>
    <property type="match status" value="1"/>
</dbReference>
<reference key="1">
    <citation type="journal article" date="2003" name="Proc. Natl. Acad. Sci. U.S.A.">
        <title>The complete genome sequence of Mycobacterium bovis.</title>
        <authorList>
            <person name="Garnier T."/>
            <person name="Eiglmeier K."/>
            <person name="Camus J.-C."/>
            <person name="Medina N."/>
            <person name="Mansoor H."/>
            <person name="Pryor M."/>
            <person name="Duthoy S."/>
            <person name="Grondin S."/>
            <person name="Lacroix C."/>
            <person name="Monsempe C."/>
            <person name="Simon S."/>
            <person name="Harris B."/>
            <person name="Atkin R."/>
            <person name="Doggett J."/>
            <person name="Mayes R."/>
            <person name="Keating L."/>
            <person name="Wheeler P.R."/>
            <person name="Parkhill J."/>
            <person name="Barrell B.G."/>
            <person name="Cole S.T."/>
            <person name="Gordon S.V."/>
            <person name="Hewinson R.G."/>
        </authorList>
    </citation>
    <scope>NUCLEOTIDE SEQUENCE [LARGE SCALE GENOMIC DNA]</scope>
    <source>
        <strain>ATCC BAA-935 / AF2122/97</strain>
    </source>
</reference>
<reference key="2">
    <citation type="journal article" date="2017" name="Genome Announc.">
        <title>Updated reference genome sequence and annotation of Mycobacterium bovis AF2122/97.</title>
        <authorList>
            <person name="Malone K.M."/>
            <person name="Farrell D."/>
            <person name="Stuber T.P."/>
            <person name="Schubert O.T."/>
            <person name="Aebersold R."/>
            <person name="Robbe-Austerman S."/>
            <person name="Gordon S.V."/>
        </authorList>
    </citation>
    <scope>NUCLEOTIDE SEQUENCE [LARGE SCALE GENOMIC DNA]</scope>
    <scope>GENOME REANNOTATION</scope>
    <source>
        <strain>ATCC BAA-935 / AF2122/97</strain>
    </source>
</reference>